<evidence type="ECO:0000305" key="1"/>
<accession>Q7KWN5</accession>
<accession>Q558R4</accession>
<sequence>MVKCSISSIGNVKSISKSNNLSSLSNSSSSLQSMNSIQCGGGCGNGGLLGGVGGLVGGVLVGTGVIVGSVLHGVGSILTGGSNNCGCN</sequence>
<comment type="similarity">
    <text evidence="1">Belongs to the hssA/B family.</text>
</comment>
<feature type="chain" id="PRO_0000330389" description="HssA/B-like protein 19">
    <location>
        <begin position="1"/>
        <end position="88"/>
    </location>
</feature>
<gene>
    <name type="primary">hssl19</name>
    <name type="ORF">DDB_G0273023</name>
</gene>
<reference key="1">
    <citation type="journal article" date="2002" name="Nature">
        <title>Sequence and analysis of chromosome 2 of Dictyostelium discoideum.</title>
        <authorList>
            <person name="Gloeckner G."/>
            <person name="Eichinger L."/>
            <person name="Szafranski K."/>
            <person name="Pachebat J.A."/>
            <person name="Bankier A.T."/>
            <person name="Dear P.H."/>
            <person name="Lehmann R."/>
            <person name="Baumgart C."/>
            <person name="Parra G."/>
            <person name="Abril J.F."/>
            <person name="Guigo R."/>
            <person name="Kumpf K."/>
            <person name="Tunggal B."/>
            <person name="Cox E.C."/>
            <person name="Quail M.A."/>
            <person name="Platzer M."/>
            <person name="Rosenthal A."/>
            <person name="Noegel A.A."/>
        </authorList>
    </citation>
    <scope>NUCLEOTIDE SEQUENCE [LARGE SCALE GENOMIC DNA]</scope>
    <source>
        <strain>AX4</strain>
    </source>
</reference>
<reference key="2">
    <citation type="journal article" date="2005" name="Nature">
        <title>The genome of the social amoeba Dictyostelium discoideum.</title>
        <authorList>
            <person name="Eichinger L."/>
            <person name="Pachebat J.A."/>
            <person name="Gloeckner G."/>
            <person name="Rajandream M.A."/>
            <person name="Sucgang R."/>
            <person name="Berriman M."/>
            <person name="Song J."/>
            <person name="Olsen R."/>
            <person name="Szafranski K."/>
            <person name="Xu Q."/>
            <person name="Tunggal B."/>
            <person name="Kummerfeld S."/>
            <person name="Madera M."/>
            <person name="Konfortov B.A."/>
            <person name="Rivero F."/>
            <person name="Bankier A.T."/>
            <person name="Lehmann R."/>
            <person name="Hamlin N."/>
            <person name="Davies R."/>
            <person name="Gaudet P."/>
            <person name="Fey P."/>
            <person name="Pilcher K."/>
            <person name="Chen G."/>
            <person name="Saunders D."/>
            <person name="Sodergren E.J."/>
            <person name="Davis P."/>
            <person name="Kerhornou A."/>
            <person name="Nie X."/>
            <person name="Hall N."/>
            <person name="Anjard C."/>
            <person name="Hemphill L."/>
            <person name="Bason N."/>
            <person name="Farbrother P."/>
            <person name="Desany B."/>
            <person name="Just E."/>
            <person name="Morio T."/>
            <person name="Rost R."/>
            <person name="Churcher C.M."/>
            <person name="Cooper J."/>
            <person name="Haydock S."/>
            <person name="van Driessche N."/>
            <person name="Cronin A."/>
            <person name="Goodhead I."/>
            <person name="Muzny D.M."/>
            <person name="Mourier T."/>
            <person name="Pain A."/>
            <person name="Lu M."/>
            <person name="Harper D."/>
            <person name="Lindsay R."/>
            <person name="Hauser H."/>
            <person name="James K.D."/>
            <person name="Quiles M."/>
            <person name="Madan Babu M."/>
            <person name="Saito T."/>
            <person name="Buchrieser C."/>
            <person name="Wardroper A."/>
            <person name="Felder M."/>
            <person name="Thangavelu M."/>
            <person name="Johnson D."/>
            <person name="Knights A."/>
            <person name="Loulseged H."/>
            <person name="Mungall K.L."/>
            <person name="Oliver K."/>
            <person name="Price C."/>
            <person name="Quail M.A."/>
            <person name="Urushihara H."/>
            <person name="Hernandez J."/>
            <person name="Rabbinowitsch E."/>
            <person name="Steffen D."/>
            <person name="Sanders M."/>
            <person name="Ma J."/>
            <person name="Kohara Y."/>
            <person name="Sharp S."/>
            <person name="Simmonds M.N."/>
            <person name="Spiegler S."/>
            <person name="Tivey A."/>
            <person name="Sugano S."/>
            <person name="White B."/>
            <person name="Walker D."/>
            <person name="Woodward J.R."/>
            <person name="Winckler T."/>
            <person name="Tanaka Y."/>
            <person name="Shaulsky G."/>
            <person name="Schleicher M."/>
            <person name="Weinstock G.M."/>
            <person name="Rosenthal A."/>
            <person name="Cox E.C."/>
            <person name="Chisholm R.L."/>
            <person name="Gibbs R.A."/>
            <person name="Loomis W.F."/>
            <person name="Platzer M."/>
            <person name="Kay R.R."/>
            <person name="Williams J.G."/>
            <person name="Dear P.H."/>
            <person name="Noegel A.A."/>
            <person name="Barrell B.G."/>
            <person name="Kuspa A."/>
        </authorList>
    </citation>
    <scope>NUCLEOTIDE SEQUENCE [LARGE SCALE GENOMIC DNA]</scope>
    <source>
        <strain>AX4</strain>
    </source>
</reference>
<keyword id="KW-1185">Reference proteome</keyword>
<proteinExistence type="inferred from homology"/>
<dbReference type="EMBL" id="AAFI02000008">
    <property type="protein sequence ID" value="EAL71149.1"/>
    <property type="molecule type" value="Genomic_DNA"/>
</dbReference>
<dbReference type="RefSeq" id="XP_645002.1">
    <property type="nucleotide sequence ID" value="XM_639910.1"/>
</dbReference>
<dbReference type="PaxDb" id="44689-DDB0233577"/>
<dbReference type="EnsemblProtists" id="EAL71149">
    <property type="protein sequence ID" value="EAL71149"/>
    <property type="gene ID" value="DDB_G0273023"/>
</dbReference>
<dbReference type="GeneID" id="8618679"/>
<dbReference type="KEGG" id="ddi:DDB_G0273023"/>
<dbReference type="dictyBase" id="DDB_G0273023">
    <property type="gene designation" value="sigN2"/>
</dbReference>
<dbReference type="HOGENOM" id="CLU_190274_0_0_1"/>
<dbReference type="InParanoid" id="Q7KWN5"/>
<dbReference type="OMA" id="CGNGGIN"/>
<dbReference type="PRO" id="PR:Q7KWN5"/>
<dbReference type="Proteomes" id="UP000002195">
    <property type="component" value="Chromosome 2"/>
</dbReference>
<dbReference type="InterPro" id="IPR008455">
    <property type="entry name" value="HssA/B-related"/>
</dbReference>
<dbReference type="PANTHER" id="PTHR31857">
    <property type="entry name" value="HSSA/B-LIKE PROTEIN 17-RELATED"/>
    <property type="match status" value="1"/>
</dbReference>
<dbReference type="PANTHER" id="PTHR31857:SF2">
    <property type="entry name" value="HSSA_B-LIKE PROTEIN 17-RELATED"/>
    <property type="match status" value="1"/>
</dbReference>
<dbReference type="Pfam" id="PF05710">
    <property type="entry name" value="Coiled"/>
    <property type="match status" value="1"/>
</dbReference>
<name>HSL19_DICDI</name>
<organism>
    <name type="scientific">Dictyostelium discoideum</name>
    <name type="common">Social amoeba</name>
    <dbReference type="NCBI Taxonomy" id="44689"/>
    <lineage>
        <taxon>Eukaryota</taxon>
        <taxon>Amoebozoa</taxon>
        <taxon>Evosea</taxon>
        <taxon>Eumycetozoa</taxon>
        <taxon>Dictyostelia</taxon>
        <taxon>Dictyosteliales</taxon>
        <taxon>Dictyosteliaceae</taxon>
        <taxon>Dictyostelium</taxon>
    </lineage>
</organism>
<protein>
    <recommendedName>
        <fullName>HssA/B-like protein 19</fullName>
    </recommendedName>
</protein>